<accession>P9WGN9</accession>
<accession>L0TD04</accession>
<accession>Q50635</accession>
<proteinExistence type="evidence at protein level"/>
<gene>
    <name evidence="1" type="primary">secF</name>
    <name type="ordered locus">Rv2586c</name>
    <name type="ORF">MTCY227.15</name>
</gene>
<dbReference type="EMBL" id="AL123456">
    <property type="protein sequence ID" value="CCP45382.1"/>
    <property type="molecule type" value="Genomic_DNA"/>
</dbReference>
<dbReference type="PIR" id="A70726">
    <property type="entry name" value="A70726"/>
</dbReference>
<dbReference type="RefSeq" id="NP_217102.1">
    <property type="nucleotide sequence ID" value="NC_000962.3"/>
</dbReference>
<dbReference type="RefSeq" id="WP_003899387.1">
    <property type="nucleotide sequence ID" value="NZ_NVQJ01000023.1"/>
</dbReference>
<dbReference type="SMR" id="P9WGN9"/>
<dbReference type="FunCoup" id="P9WGN9">
    <property type="interactions" value="28"/>
</dbReference>
<dbReference type="STRING" id="83332.Rv2586c"/>
<dbReference type="PaxDb" id="83332-Rv2586c"/>
<dbReference type="DNASU" id="887229"/>
<dbReference type="GeneID" id="887229"/>
<dbReference type="KEGG" id="mtu:Rv2586c"/>
<dbReference type="KEGG" id="mtv:RVBD_2586c"/>
<dbReference type="TubercuList" id="Rv2586c"/>
<dbReference type="eggNOG" id="COG0341">
    <property type="taxonomic scope" value="Bacteria"/>
</dbReference>
<dbReference type="InParanoid" id="P9WGN9"/>
<dbReference type="OrthoDB" id="9774769at2"/>
<dbReference type="PhylomeDB" id="P9WGN9"/>
<dbReference type="Reactome" id="R-HSA-1222387">
    <property type="pathway name" value="Tolerance of reactive oxygen produced by macrophages"/>
</dbReference>
<dbReference type="Proteomes" id="UP000001584">
    <property type="component" value="Chromosome"/>
</dbReference>
<dbReference type="GO" id="GO:0009274">
    <property type="term" value="C:peptidoglycan-based cell wall"/>
    <property type="evidence" value="ECO:0007005"/>
    <property type="project" value="MTBBASE"/>
</dbReference>
<dbReference type="GO" id="GO:0005886">
    <property type="term" value="C:plasma membrane"/>
    <property type="evidence" value="ECO:0007005"/>
    <property type="project" value="MTBBASE"/>
</dbReference>
<dbReference type="GO" id="GO:0015450">
    <property type="term" value="F:protein-transporting ATPase activity"/>
    <property type="evidence" value="ECO:0007669"/>
    <property type="project" value="InterPro"/>
</dbReference>
<dbReference type="GO" id="GO:0065002">
    <property type="term" value="P:intracellular protein transmembrane transport"/>
    <property type="evidence" value="ECO:0007669"/>
    <property type="project" value="UniProtKB-UniRule"/>
</dbReference>
<dbReference type="GO" id="GO:0006605">
    <property type="term" value="P:protein targeting"/>
    <property type="evidence" value="ECO:0007669"/>
    <property type="project" value="UniProtKB-UniRule"/>
</dbReference>
<dbReference type="GO" id="GO:0015031">
    <property type="term" value="P:protein transport"/>
    <property type="evidence" value="ECO:0000318"/>
    <property type="project" value="GO_Central"/>
</dbReference>
<dbReference type="GO" id="GO:0043952">
    <property type="term" value="P:protein transport by the Sec complex"/>
    <property type="evidence" value="ECO:0007669"/>
    <property type="project" value="UniProtKB-UniRule"/>
</dbReference>
<dbReference type="FunFam" id="1.20.1640.10:FF:000023">
    <property type="entry name" value="Protein-export membrane protein SecF"/>
    <property type="match status" value="1"/>
</dbReference>
<dbReference type="Gene3D" id="1.20.1640.10">
    <property type="entry name" value="Multidrug efflux transporter AcrB transmembrane domain"/>
    <property type="match status" value="1"/>
</dbReference>
<dbReference type="HAMAP" id="MF_01464_B">
    <property type="entry name" value="SecF_B"/>
    <property type="match status" value="1"/>
</dbReference>
<dbReference type="InterPro" id="IPR022813">
    <property type="entry name" value="SecD/SecF_arch_bac"/>
</dbReference>
<dbReference type="InterPro" id="IPR022645">
    <property type="entry name" value="SecD/SecF_bac"/>
</dbReference>
<dbReference type="InterPro" id="IPR022646">
    <property type="entry name" value="SecD/SecF_CS"/>
</dbReference>
<dbReference type="InterPro" id="IPR048634">
    <property type="entry name" value="SecD_SecF_C"/>
</dbReference>
<dbReference type="InterPro" id="IPR055344">
    <property type="entry name" value="SecD_SecF_C_bact"/>
</dbReference>
<dbReference type="InterPro" id="IPR005665">
    <property type="entry name" value="SecF_bac"/>
</dbReference>
<dbReference type="NCBIfam" id="TIGR00916">
    <property type="entry name" value="2A0604s01"/>
    <property type="match status" value="1"/>
</dbReference>
<dbReference type="NCBIfam" id="TIGR00966">
    <property type="entry name" value="transloc_SecF"/>
    <property type="match status" value="1"/>
</dbReference>
<dbReference type="PANTHER" id="PTHR30081:SF8">
    <property type="entry name" value="PROTEIN TRANSLOCASE SUBUNIT SECF"/>
    <property type="match status" value="1"/>
</dbReference>
<dbReference type="PANTHER" id="PTHR30081">
    <property type="entry name" value="PROTEIN-EXPORT MEMBRANE PROTEIN SEC"/>
    <property type="match status" value="1"/>
</dbReference>
<dbReference type="Pfam" id="PF07549">
    <property type="entry name" value="Sec_GG"/>
    <property type="match status" value="1"/>
</dbReference>
<dbReference type="Pfam" id="PF02355">
    <property type="entry name" value="SecD_SecF_C"/>
    <property type="match status" value="1"/>
</dbReference>
<dbReference type="PRINTS" id="PR01755">
    <property type="entry name" value="SECFTRNLCASE"/>
</dbReference>
<dbReference type="SUPFAM" id="SSF82866">
    <property type="entry name" value="Multidrug efflux transporter AcrB transmembrane domain"/>
    <property type="match status" value="1"/>
</dbReference>
<reference key="1">
    <citation type="journal article" date="1998" name="Nature">
        <title>Deciphering the biology of Mycobacterium tuberculosis from the complete genome sequence.</title>
        <authorList>
            <person name="Cole S.T."/>
            <person name="Brosch R."/>
            <person name="Parkhill J."/>
            <person name="Garnier T."/>
            <person name="Churcher C.M."/>
            <person name="Harris D.E."/>
            <person name="Gordon S.V."/>
            <person name="Eiglmeier K."/>
            <person name="Gas S."/>
            <person name="Barry C.E. III"/>
            <person name="Tekaia F."/>
            <person name="Badcock K."/>
            <person name="Basham D."/>
            <person name="Brown D."/>
            <person name="Chillingworth T."/>
            <person name="Connor R."/>
            <person name="Davies R.M."/>
            <person name="Devlin K."/>
            <person name="Feltwell T."/>
            <person name="Gentles S."/>
            <person name="Hamlin N."/>
            <person name="Holroyd S."/>
            <person name="Hornsby T."/>
            <person name="Jagels K."/>
            <person name="Krogh A."/>
            <person name="McLean J."/>
            <person name="Moule S."/>
            <person name="Murphy L.D."/>
            <person name="Oliver S."/>
            <person name="Osborne J."/>
            <person name="Quail M.A."/>
            <person name="Rajandream M.A."/>
            <person name="Rogers J."/>
            <person name="Rutter S."/>
            <person name="Seeger K."/>
            <person name="Skelton S."/>
            <person name="Squares S."/>
            <person name="Squares R."/>
            <person name="Sulston J.E."/>
            <person name="Taylor K."/>
            <person name="Whitehead S."/>
            <person name="Barrell B.G."/>
        </authorList>
    </citation>
    <scope>NUCLEOTIDE SEQUENCE [LARGE SCALE GENOMIC DNA]</scope>
    <source>
        <strain>ATCC 25618 / H37Rv</strain>
    </source>
</reference>
<reference key="2">
    <citation type="journal article" date="2011" name="Mol. Cell. Proteomics">
        <title>Proteogenomic analysis of Mycobacterium tuberculosis by high resolution mass spectrometry.</title>
        <authorList>
            <person name="Kelkar D.S."/>
            <person name="Kumar D."/>
            <person name="Kumar P."/>
            <person name="Balakrishnan L."/>
            <person name="Muthusamy B."/>
            <person name="Yadav A.K."/>
            <person name="Shrivastava P."/>
            <person name="Marimuthu A."/>
            <person name="Anand S."/>
            <person name="Sundaram H."/>
            <person name="Kingsbury R."/>
            <person name="Harsha H.C."/>
            <person name="Nair B."/>
            <person name="Prasad T.S."/>
            <person name="Chauhan D.S."/>
            <person name="Katoch K."/>
            <person name="Katoch V.M."/>
            <person name="Kumar P."/>
            <person name="Chaerkady R."/>
            <person name="Ramachandran S."/>
            <person name="Dash D."/>
            <person name="Pandey A."/>
        </authorList>
    </citation>
    <scope>IDENTIFICATION BY MASS SPECTROMETRY [LARGE SCALE ANALYSIS]</scope>
    <source>
        <strain>ATCC 25618 / H37Rv</strain>
    </source>
</reference>
<keyword id="KW-1003">Cell membrane</keyword>
<keyword id="KW-0472">Membrane</keyword>
<keyword id="KW-0653">Protein transport</keyword>
<keyword id="KW-1185">Reference proteome</keyword>
<keyword id="KW-0811">Translocation</keyword>
<keyword id="KW-0812">Transmembrane</keyword>
<keyword id="KW-1133">Transmembrane helix</keyword>
<keyword id="KW-0813">Transport</keyword>
<protein>
    <recommendedName>
        <fullName>Protein translocase subunit SecF</fullName>
    </recommendedName>
</protein>
<feature type="chain" id="PRO_0000095983" description="Protein translocase subunit SecF">
    <location>
        <begin position="1"/>
        <end position="442"/>
    </location>
</feature>
<feature type="transmembrane region" description="Helical" evidence="1">
    <location>
        <begin position="67"/>
        <end position="87"/>
    </location>
</feature>
<feature type="transmembrane region" description="Helical" evidence="1">
    <location>
        <begin position="187"/>
        <end position="207"/>
    </location>
</feature>
<feature type="transmembrane region" description="Helical" evidence="1">
    <location>
        <begin position="218"/>
        <end position="238"/>
    </location>
</feature>
<feature type="transmembrane region" description="Helical" evidence="1">
    <location>
        <begin position="243"/>
        <end position="263"/>
    </location>
</feature>
<feature type="transmembrane region" description="Helical" evidence="1">
    <location>
        <begin position="301"/>
        <end position="321"/>
    </location>
</feature>
<feature type="transmembrane region" description="Helical" evidence="1">
    <location>
        <begin position="331"/>
        <end position="351"/>
    </location>
</feature>
<feature type="region of interest" description="Disordered" evidence="2">
    <location>
        <begin position="1"/>
        <end position="39"/>
    </location>
</feature>
<feature type="region of interest" description="Disordered" evidence="2">
    <location>
        <begin position="366"/>
        <end position="442"/>
    </location>
</feature>
<feature type="compositionally biased region" description="Low complexity" evidence="2">
    <location>
        <begin position="402"/>
        <end position="432"/>
    </location>
</feature>
<feature type="compositionally biased region" description="Basic residues" evidence="2">
    <location>
        <begin position="433"/>
        <end position="442"/>
    </location>
</feature>
<name>SECF_MYCTU</name>
<organism>
    <name type="scientific">Mycobacterium tuberculosis (strain ATCC 25618 / H37Rv)</name>
    <dbReference type="NCBI Taxonomy" id="83332"/>
    <lineage>
        <taxon>Bacteria</taxon>
        <taxon>Bacillati</taxon>
        <taxon>Actinomycetota</taxon>
        <taxon>Actinomycetes</taxon>
        <taxon>Mycobacteriales</taxon>
        <taxon>Mycobacteriaceae</taxon>
        <taxon>Mycobacterium</taxon>
        <taxon>Mycobacterium tuberculosis complex</taxon>
    </lineage>
</organism>
<sequence>MASKAKTGRDDEATSAVELTEATESAVARTDGDSTTDTASKLGHHSFLSRLYTGTGAFEVVGRRRLWFGVSGAIVAVAIASIVFRGFTFGIDFKGGTTVSFPRGSTQVAQVEDVYYRALGSEPQSVVIVGAGASATVQIRSETLTSDQTAKLRDALFEAFGPKGTDGQPSKQAISDSAVSETWGGQITKKAVIALVVFLVLVALYITVRYERYMTISAITAMLFDLTVTAGVYSLVGFEVTPATVIGLLTILGFSLYDTVIVFDKVEENTHGFQHTTRRTFAEQANLAINQTFMRSINTSLIGVLPVLALMVVAVWLLGVGTLKDLALVQLIGIIIGTYSSIFFATPLLVTLRERTELVRNHTRRVLKRRNSGSPAGSEDASTDGGEQPAAADEQSLVGITQASSQSAPRAAQGSSKPAPGARPVRPVGTRRPTGKRNAGRR</sequence>
<evidence type="ECO:0000255" key="1">
    <source>
        <dbReference type="HAMAP-Rule" id="MF_01464"/>
    </source>
</evidence>
<evidence type="ECO:0000256" key="2">
    <source>
        <dbReference type="SAM" id="MobiDB-lite"/>
    </source>
</evidence>
<comment type="function">
    <text evidence="1">Part of the Sec protein translocase complex. Interacts with the SecYEG preprotein conducting channel. SecDF uses the proton motive force (PMF) to complete protein translocation after the ATP-dependent function of SecA.</text>
</comment>
<comment type="subunit">
    <text evidence="1">Forms a complex with SecD. Part of the essential Sec protein translocation apparatus which comprises SecA, SecYEG and auxiliary proteins SecDF. Other proteins may also be involved.</text>
</comment>
<comment type="subcellular location">
    <subcellularLocation>
        <location evidence="1">Cell membrane</location>
        <topology evidence="1">Multi-pass membrane protein</topology>
    </subcellularLocation>
</comment>
<comment type="similarity">
    <text evidence="1">Belongs to the SecD/SecF family. SecF subfamily.</text>
</comment>